<proteinExistence type="evidence at protein level"/>
<keyword id="KW-0002">3D-structure</keyword>
<keyword id="KW-0007">Acetylation</keyword>
<keyword id="KW-1015">Disulfide bond</keyword>
<keyword id="KW-0256">Endoplasmic reticulum</keyword>
<keyword id="KW-0325">Glycoprotein</keyword>
<keyword id="KW-0413">Isomerase</keyword>
<keyword id="KW-0676">Redox-active center</keyword>
<keyword id="KW-1185">Reference proteome</keyword>
<keyword id="KW-0677">Repeat</keyword>
<keyword id="KW-0732">Signal</keyword>
<organism>
    <name type="scientific">Mus musculus</name>
    <name type="common">Mouse</name>
    <dbReference type="NCBI Taxonomy" id="10090"/>
    <lineage>
        <taxon>Eukaryota</taxon>
        <taxon>Metazoa</taxon>
        <taxon>Chordata</taxon>
        <taxon>Craniata</taxon>
        <taxon>Vertebrata</taxon>
        <taxon>Euteleostomi</taxon>
        <taxon>Mammalia</taxon>
        <taxon>Eutheria</taxon>
        <taxon>Euarchontoglires</taxon>
        <taxon>Glires</taxon>
        <taxon>Rodentia</taxon>
        <taxon>Myomorpha</taxon>
        <taxon>Muroidea</taxon>
        <taxon>Muridae</taxon>
        <taxon>Murinae</taxon>
        <taxon>Mus</taxon>
        <taxon>Mus</taxon>
    </lineage>
</organism>
<feature type="signal peptide" evidence="2">
    <location>
        <begin position="1"/>
        <end position="20"/>
    </location>
</feature>
<feature type="chain" id="PRO_0000034230" description="Protein disulfide-isomerase A4">
    <location>
        <begin position="21"/>
        <end position="638"/>
    </location>
</feature>
<feature type="domain" description="Thioredoxin 1" evidence="3">
    <location>
        <begin position="21"/>
        <end position="162"/>
    </location>
</feature>
<feature type="domain" description="Thioredoxin 2" evidence="3">
    <location>
        <begin position="162"/>
        <end position="294"/>
    </location>
</feature>
<feature type="domain" description="Thioredoxin 3" evidence="3">
    <location>
        <begin position="498"/>
        <end position="629"/>
    </location>
</feature>
<feature type="region of interest" description="Disordered" evidence="4">
    <location>
        <begin position="24"/>
        <end position="50"/>
    </location>
</feature>
<feature type="short sequence motif" description="CXXC" evidence="7">
    <location>
        <begin position="84"/>
        <end position="87"/>
    </location>
</feature>
<feature type="short sequence motif" description="CXXC" evidence="7">
    <location>
        <begin position="548"/>
        <end position="551"/>
    </location>
</feature>
<feature type="short sequence motif" description="Prevents secretion from ER">
    <location>
        <begin position="635"/>
        <end position="638"/>
    </location>
</feature>
<feature type="compositionally biased region" description="Acidic residues" evidence="4">
    <location>
        <begin position="32"/>
        <end position="50"/>
    </location>
</feature>
<feature type="modified residue" description="N6-acetyllysine" evidence="1">
    <location>
        <position position="359"/>
    </location>
</feature>
<feature type="glycosylation site" description="N-linked (GlcNAc...) asparagine" evidence="2">
    <location>
        <position position="36"/>
    </location>
</feature>
<feature type="disulfide bond" description="Redox-active" evidence="3 5">
    <location>
        <begin position="84"/>
        <end position="87"/>
    </location>
</feature>
<feature type="disulfide bond" description="Redox-active" evidence="3">
    <location>
        <begin position="199"/>
        <end position="202"/>
    </location>
</feature>
<feature type="disulfide bond" description="Redox-active" evidence="3 5">
    <location>
        <begin position="548"/>
        <end position="551"/>
    </location>
</feature>
<feature type="mutagenesis site" description="Substrate-trapping mutant." evidence="5">
    <original>C</original>
    <variation>A</variation>
    <location>
        <position position="87"/>
    </location>
</feature>
<feature type="mutagenesis site" description="Substrate-trapping mutant." evidence="5">
    <original>C</original>
    <variation>A</variation>
    <location>
        <position position="551"/>
    </location>
</feature>
<feature type="sequence conflict" description="In Ref. 1; AAA39907, 2; BAE27045 and 3; AAI41079." evidence="6" ref="1 2 3">
    <original>H</original>
    <variation>Q</variation>
    <location>
        <position position="28"/>
    </location>
</feature>
<feature type="sequence conflict" description="In Ref. 2; BAC25863/BAE41134/BAE36446/BAE29664." evidence="6" ref="2">
    <original>E</original>
    <variation>EEEE</variation>
    <location>
        <position position="39"/>
    </location>
</feature>
<feature type="sequence conflict" description="In Ref. 2; BAC25863." evidence="6" ref="2">
    <original>N</original>
    <variation>S</variation>
    <location>
        <position position="468"/>
    </location>
</feature>
<feature type="strand" evidence="8">
    <location>
        <begin position="52"/>
        <end position="54"/>
    </location>
</feature>
<feature type="strand" evidence="8">
    <location>
        <begin position="57"/>
        <end position="59"/>
    </location>
</feature>
<feature type="turn" evidence="8">
    <location>
        <begin position="62"/>
        <end position="64"/>
    </location>
</feature>
<feature type="helix" evidence="8">
    <location>
        <begin position="65"/>
        <end position="69"/>
    </location>
</feature>
<feature type="strand" evidence="8">
    <location>
        <begin position="73"/>
        <end position="79"/>
    </location>
</feature>
<feature type="helix" evidence="8">
    <location>
        <begin position="85"/>
        <end position="88"/>
    </location>
</feature>
<feature type="helix" evidence="8">
    <location>
        <begin position="91"/>
        <end position="102"/>
    </location>
</feature>
<feature type="strand" evidence="8">
    <location>
        <begin position="103"/>
        <end position="106"/>
    </location>
</feature>
<feature type="strand" evidence="8">
    <location>
        <begin position="109"/>
        <end position="113"/>
    </location>
</feature>
<feature type="turn" evidence="8">
    <location>
        <begin position="115"/>
        <end position="117"/>
    </location>
</feature>
<feature type="helix" evidence="8">
    <location>
        <begin position="119"/>
        <end position="124"/>
    </location>
</feature>
<feature type="strand" evidence="8">
    <location>
        <begin position="129"/>
        <end position="137"/>
    </location>
</feature>
<feature type="strand" evidence="8">
    <location>
        <begin position="140"/>
        <end position="143"/>
    </location>
</feature>
<feature type="helix" evidence="8">
    <location>
        <begin position="150"/>
        <end position="161"/>
    </location>
</feature>
<feature type="strand" evidence="8">
    <location>
        <begin position="162"/>
        <end position="164"/>
    </location>
</feature>
<feature type="strand" evidence="9">
    <location>
        <begin position="171"/>
        <end position="173"/>
    </location>
</feature>
<feature type="turn" evidence="9">
    <location>
        <begin position="177"/>
        <end position="179"/>
    </location>
</feature>
<feature type="turn" evidence="9">
    <location>
        <begin position="181"/>
        <end position="183"/>
    </location>
</feature>
<feature type="helix" evidence="9">
    <location>
        <begin position="184"/>
        <end position="186"/>
    </location>
</feature>
<feature type="strand" evidence="9">
    <location>
        <begin position="188"/>
        <end position="195"/>
    </location>
</feature>
<feature type="helix" evidence="9">
    <location>
        <begin position="200"/>
        <end position="218"/>
    </location>
</feature>
<feature type="strand" evidence="9">
    <location>
        <begin position="219"/>
        <end position="221"/>
    </location>
</feature>
<feature type="strand" evidence="9">
    <location>
        <begin position="225"/>
        <end position="229"/>
    </location>
</feature>
<feature type="turn" evidence="9">
    <location>
        <begin position="230"/>
        <end position="232"/>
    </location>
</feature>
<feature type="helix" evidence="9">
    <location>
        <begin position="234"/>
        <end position="239"/>
    </location>
</feature>
<feature type="strand" evidence="9">
    <location>
        <begin position="244"/>
        <end position="254"/>
    </location>
</feature>
<feature type="strand" evidence="9">
    <location>
        <begin position="256"/>
        <end position="258"/>
    </location>
</feature>
<feature type="helix" evidence="9">
    <location>
        <begin position="265"/>
        <end position="277"/>
    </location>
</feature>
<feature type="strand" evidence="10">
    <location>
        <begin position="519"/>
        <end position="522"/>
    </location>
</feature>
<feature type="turn" evidence="10">
    <location>
        <begin position="525"/>
        <end position="527"/>
    </location>
</feature>
<feature type="helix" evidence="10">
    <location>
        <begin position="528"/>
        <end position="532"/>
    </location>
</feature>
<feature type="strand" evidence="10">
    <location>
        <begin position="537"/>
        <end position="543"/>
    </location>
</feature>
<feature type="helix" evidence="10">
    <location>
        <begin position="550"/>
        <end position="565"/>
    </location>
</feature>
<feature type="strand" evidence="10">
    <location>
        <begin position="568"/>
        <end position="576"/>
    </location>
</feature>
<feature type="turn" evidence="10">
    <location>
        <begin position="578"/>
        <end position="580"/>
    </location>
</feature>
<feature type="strand" evidence="10">
    <location>
        <begin position="591"/>
        <end position="599"/>
    </location>
</feature>
<feature type="helix" evidence="10">
    <location>
        <begin position="619"/>
        <end position="627"/>
    </location>
</feature>
<feature type="strand" evidence="10">
    <location>
        <begin position="628"/>
        <end position="630"/>
    </location>
</feature>
<gene>
    <name type="primary">Pdia4</name>
    <name type="synonym">Cai</name>
    <name type="synonym">Erp72</name>
</gene>
<reference key="1">
    <citation type="journal article" date="1990" name="J. Biol. Chem.">
        <title>ERp72, an abundant luminal endoplasmic reticulum protein, contains three copies of the active site sequences of protein disulfide isomerase.</title>
        <authorList>
            <person name="Mazzarella R.A."/>
            <person name="Srinivasan M."/>
            <person name="Haugejorden S.M."/>
            <person name="Green M."/>
        </authorList>
    </citation>
    <scope>NUCLEOTIDE SEQUENCE [MRNA]</scope>
</reference>
<reference key="2">
    <citation type="journal article" date="2005" name="Science">
        <title>The transcriptional landscape of the mammalian genome.</title>
        <authorList>
            <person name="Carninci P."/>
            <person name="Kasukawa T."/>
            <person name="Katayama S."/>
            <person name="Gough J."/>
            <person name="Frith M.C."/>
            <person name="Maeda N."/>
            <person name="Oyama R."/>
            <person name="Ravasi T."/>
            <person name="Lenhard B."/>
            <person name="Wells C."/>
            <person name="Kodzius R."/>
            <person name="Shimokawa K."/>
            <person name="Bajic V.B."/>
            <person name="Brenner S.E."/>
            <person name="Batalov S."/>
            <person name="Forrest A.R."/>
            <person name="Zavolan M."/>
            <person name="Davis M.J."/>
            <person name="Wilming L.G."/>
            <person name="Aidinis V."/>
            <person name="Allen J.E."/>
            <person name="Ambesi-Impiombato A."/>
            <person name="Apweiler R."/>
            <person name="Aturaliya R.N."/>
            <person name="Bailey T.L."/>
            <person name="Bansal M."/>
            <person name="Baxter L."/>
            <person name="Beisel K.W."/>
            <person name="Bersano T."/>
            <person name="Bono H."/>
            <person name="Chalk A.M."/>
            <person name="Chiu K.P."/>
            <person name="Choudhary V."/>
            <person name="Christoffels A."/>
            <person name="Clutterbuck D.R."/>
            <person name="Crowe M.L."/>
            <person name="Dalla E."/>
            <person name="Dalrymple B.P."/>
            <person name="de Bono B."/>
            <person name="Della Gatta G."/>
            <person name="di Bernardo D."/>
            <person name="Down T."/>
            <person name="Engstrom P."/>
            <person name="Fagiolini M."/>
            <person name="Faulkner G."/>
            <person name="Fletcher C.F."/>
            <person name="Fukushima T."/>
            <person name="Furuno M."/>
            <person name="Futaki S."/>
            <person name="Gariboldi M."/>
            <person name="Georgii-Hemming P."/>
            <person name="Gingeras T.R."/>
            <person name="Gojobori T."/>
            <person name="Green R.E."/>
            <person name="Gustincich S."/>
            <person name="Harbers M."/>
            <person name="Hayashi Y."/>
            <person name="Hensch T.K."/>
            <person name="Hirokawa N."/>
            <person name="Hill D."/>
            <person name="Huminiecki L."/>
            <person name="Iacono M."/>
            <person name="Ikeo K."/>
            <person name="Iwama A."/>
            <person name="Ishikawa T."/>
            <person name="Jakt M."/>
            <person name="Kanapin A."/>
            <person name="Katoh M."/>
            <person name="Kawasawa Y."/>
            <person name="Kelso J."/>
            <person name="Kitamura H."/>
            <person name="Kitano H."/>
            <person name="Kollias G."/>
            <person name="Krishnan S.P."/>
            <person name="Kruger A."/>
            <person name="Kummerfeld S.K."/>
            <person name="Kurochkin I.V."/>
            <person name="Lareau L.F."/>
            <person name="Lazarevic D."/>
            <person name="Lipovich L."/>
            <person name="Liu J."/>
            <person name="Liuni S."/>
            <person name="McWilliam S."/>
            <person name="Madan Babu M."/>
            <person name="Madera M."/>
            <person name="Marchionni L."/>
            <person name="Matsuda H."/>
            <person name="Matsuzawa S."/>
            <person name="Miki H."/>
            <person name="Mignone F."/>
            <person name="Miyake S."/>
            <person name="Morris K."/>
            <person name="Mottagui-Tabar S."/>
            <person name="Mulder N."/>
            <person name="Nakano N."/>
            <person name="Nakauchi H."/>
            <person name="Ng P."/>
            <person name="Nilsson R."/>
            <person name="Nishiguchi S."/>
            <person name="Nishikawa S."/>
            <person name="Nori F."/>
            <person name="Ohara O."/>
            <person name="Okazaki Y."/>
            <person name="Orlando V."/>
            <person name="Pang K.C."/>
            <person name="Pavan W.J."/>
            <person name="Pavesi G."/>
            <person name="Pesole G."/>
            <person name="Petrovsky N."/>
            <person name="Piazza S."/>
            <person name="Reed J."/>
            <person name="Reid J.F."/>
            <person name="Ring B.Z."/>
            <person name="Ringwald M."/>
            <person name="Rost B."/>
            <person name="Ruan Y."/>
            <person name="Salzberg S.L."/>
            <person name="Sandelin A."/>
            <person name="Schneider C."/>
            <person name="Schoenbach C."/>
            <person name="Sekiguchi K."/>
            <person name="Semple C.A."/>
            <person name="Seno S."/>
            <person name="Sessa L."/>
            <person name="Sheng Y."/>
            <person name="Shibata Y."/>
            <person name="Shimada H."/>
            <person name="Shimada K."/>
            <person name="Silva D."/>
            <person name="Sinclair B."/>
            <person name="Sperling S."/>
            <person name="Stupka E."/>
            <person name="Sugiura K."/>
            <person name="Sultana R."/>
            <person name="Takenaka Y."/>
            <person name="Taki K."/>
            <person name="Tammoja K."/>
            <person name="Tan S.L."/>
            <person name="Tang S."/>
            <person name="Taylor M.S."/>
            <person name="Tegner J."/>
            <person name="Teichmann S.A."/>
            <person name="Ueda H.R."/>
            <person name="van Nimwegen E."/>
            <person name="Verardo R."/>
            <person name="Wei C.L."/>
            <person name="Yagi K."/>
            <person name="Yamanishi H."/>
            <person name="Zabarovsky E."/>
            <person name="Zhu S."/>
            <person name="Zimmer A."/>
            <person name="Hide W."/>
            <person name="Bult C."/>
            <person name="Grimmond S.M."/>
            <person name="Teasdale R.D."/>
            <person name="Liu E.T."/>
            <person name="Brusic V."/>
            <person name="Quackenbush J."/>
            <person name="Wahlestedt C."/>
            <person name="Mattick J.S."/>
            <person name="Hume D.A."/>
            <person name="Kai C."/>
            <person name="Sasaki D."/>
            <person name="Tomaru Y."/>
            <person name="Fukuda S."/>
            <person name="Kanamori-Katayama M."/>
            <person name="Suzuki M."/>
            <person name="Aoki J."/>
            <person name="Arakawa T."/>
            <person name="Iida J."/>
            <person name="Imamura K."/>
            <person name="Itoh M."/>
            <person name="Kato T."/>
            <person name="Kawaji H."/>
            <person name="Kawagashira N."/>
            <person name="Kawashima T."/>
            <person name="Kojima M."/>
            <person name="Kondo S."/>
            <person name="Konno H."/>
            <person name="Nakano K."/>
            <person name="Ninomiya N."/>
            <person name="Nishio T."/>
            <person name="Okada M."/>
            <person name="Plessy C."/>
            <person name="Shibata K."/>
            <person name="Shiraki T."/>
            <person name="Suzuki S."/>
            <person name="Tagami M."/>
            <person name="Waki K."/>
            <person name="Watahiki A."/>
            <person name="Okamura-Oho Y."/>
            <person name="Suzuki H."/>
            <person name="Kawai J."/>
            <person name="Hayashizaki Y."/>
        </authorList>
    </citation>
    <scope>NUCLEOTIDE SEQUENCE [LARGE SCALE MRNA]</scope>
    <source>
        <strain>C57BL/6J</strain>
        <strain>DBA/2J</strain>
        <tissue>Amnion</tissue>
        <tissue>Bone marrow</tissue>
        <tissue>Head</tissue>
        <tissue>Ovary</tissue>
        <tissue>Uterus</tissue>
    </source>
</reference>
<reference key="3">
    <citation type="journal article" date="2004" name="Genome Res.">
        <title>The status, quality, and expansion of the NIH full-length cDNA project: the Mammalian Gene Collection (MGC).</title>
        <authorList>
            <consortium name="The MGC Project Team"/>
        </authorList>
    </citation>
    <scope>NUCLEOTIDE SEQUENCE [LARGE SCALE MRNA]</scope>
    <source>
        <strain>C57BL/6J</strain>
        <tissue>Brain</tissue>
        <tissue>Embryonic germ cell</tissue>
    </source>
</reference>
<reference key="4">
    <citation type="journal article" date="1987" name="Nucleic Acids Res.">
        <title>An mRNA sharing sequences with a variant granulocyte-macrophage colony stimulating factor cDNA clone.</title>
        <authorList>
            <person name="Gough N.M."/>
            <person name="King J.A."/>
            <person name="Dunn A.R."/>
        </authorList>
    </citation>
    <scope>NUCLEOTIDE SEQUENCE [MRNA] OF 35-638</scope>
    <source>
        <strain>BALB/cJ</strain>
        <tissue>T-cell</tissue>
    </source>
</reference>
<reference key="5">
    <citation type="journal article" date="2002" name="Mol. Biol. Cell">
        <title>A subset of chaperones and folding enzymes form multiprotein complexes in endoplasmic reticulum to bind nascent proteins.</title>
        <authorList>
            <person name="Meunier L."/>
            <person name="Usherwood Y.-K."/>
            <person name="Chung K.T."/>
            <person name="Hendershot L.M."/>
        </authorList>
    </citation>
    <scope>COMPONENT OF A CHAPERONE COMPLEX</scope>
</reference>
<reference key="6">
    <citation type="journal article" date="2010" name="Cell">
        <title>A tissue-specific atlas of mouse protein phosphorylation and expression.</title>
        <authorList>
            <person name="Huttlin E.L."/>
            <person name="Jedrychowski M.P."/>
            <person name="Elias J.E."/>
            <person name="Goswami T."/>
            <person name="Rad R."/>
            <person name="Beausoleil S.A."/>
            <person name="Villen J."/>
            <person name="Haas W."/>
            <person name="Sowa M.E."/>
            <person name="Gygi S.P."/>
        </authorList>
    </citation>
    <scope>IDENTIFICATION BY MASS SPECTROMETRY [LARGE SCALE ANALYSIS]</scope>
    <source>
        <tissue>Brain</tissue>
        <tissue>Brown adipose tissue</tissue>
        <tissue>Heart</tissue>
        <tissue>Kidney</tissue>
        <tissue>Liver</tissue>
        <tissue>Lung</tissue>
        <tissue>Pancreas</tissue>
        <tissue>Spleen</tissue>
        <tissue>Testis</tissue>
    </source>
</reference>
<reference key="7">
    <citation type="journal article" date="2013" name="Hum. Mol. Genet.">
        <title>Armet/Manf and Creld2 are components of a specialized ER stress response provoked by inappropriate formation of disulphide bonds: implications for genetic skeletal diseases.</title>
        <authorList>
            <person name="Hartley C.L."/>
            <person name="Edwards S."/>
            <person name="Mullan L."/>
            <person name="Bell P.A."/>
            <person name="Fresquet M."/>
            <person name="Boot-Handford R.P."/>
            <person name="Briggs M.D."/>
        </authorList>
    </citation>
    <scope>CATALYTIC ACTIVITY</scope>
    <scope>IDENTIFICATION IN COMPLEX WITH CRELD2; MANF AND MATN3</scope>
    <scope>MUTAGENESIS OF CYS-87 AND CYS-551</scope>
</reference>
<reference key="8">
    <citation type="submission" date="2006-09" db="PDB data bank">
        <title>The solution structure of thioredoxin domains of mouse protein disulfide-isomerase A4.</title>
        <authorList>
            <consortium name="RIKEN structural genomics initiative (RSGI)"/>
        </authorList>
    </citation>
    <scope>STRUCTURE BY NMR OF 46-277 AND 516-638</scope>
</reference>
<dbReference type="EC" id="5.3.4.1" evidence="7"/>
<dbReference type="EMBL" id="J05186">
    <property type="protein sequence ID" value="AAA39907.1"/>
    <property type="molecule type" value="mRNA"/>
</dbReference>
<dbReference type="EMBL" id="AK028292">
    <property type="protein sequence ID" value="BAC25863.1"/>
    <property type="molecule type" value="mRNA"/>
</dbReference>
<dbReference type="EMBL" id="AK146288">
    <property type="protein sequence ID" value="BAE27045.1"/>
    <property type="molecule type" value="mRNA"/>
</dbReference>
<dbReference type="EMBL" id="AK150566">
    <property type="protein sequence ID" value="BAE29664.1"/>
    <property type="molecule type" value="mRNA"/>
</dbReference>
<dbReference type="EMBL" id="AK161534">
    <property type="protein sequence ID" value="BAE36446.1"/>
    <property type="molecule type" value="mRNA"/>
</dbReference>
<dbReference type="EMBL" id="AK169387">
    <property type="protein sequence ID" value="BAE41134.1"/>
    <property type="molecule type" value="mRNA"/>
</dbReference>
<dbReference type="EMBL" id="BC066857">
    <property type="protein sequence ID" value="AAH66857.1"/>
    <property type="molecule type" value="mRNA"/>
</dbReference>
<dbReference type="EMBL" id="BC141078">
    <property type="protein sequence ID" value="AAI41079.1"/>
    <property type="molecule type" value="mRNA"/>
</dbReference>
<dbReference type="EMBL" id="Y00884">
    <property type="protein sequence ID" value="CAA68777.1"/>
    <property type="status" value="ALT_FRAME"/>
    <property type="molecule type" value="mRNA"/>
</dbReference>
<dbReference type="PIR" id="B34930">
    <property type="entry name" value="ISMSER"/>
</dbReference>
<dbReference type="PIR" id="S06318">
    <property type="entry name" value="S06318"/>
</dbReference>
<dbReference type="RefSeq" id="NP_033917.2">
    <property type="nucleotide sequence ID" value="NM_009787.2"/>
</dbReference>
<dbReference type="PDB" id="2DJ1">
    <property type="method" value="NMR"/>
    <property type="chains" value="A=46-172"/>
</dbReference>
<dbReference type="PDB" id="2DJ2">
    <property type="method" value="NMR"/>
    <property type="chains" value="A=171-277"/>
</dbReference>
<dbReference type="PDB" id="2DJ3">
    <property type="method" value="NMR"/>
    <property type="chains" value="A=519-638"/>
</dbReference>
<dbReference type="PDBsum" id="2DJ1"/>
<dbReference type="PDBsum" id="2DJ2"/>
<dbReference type="PDBsum" id="2DJ3"/>
<dbReference type="SMR" id="P08003"/>
<dbReference type="BioGRID" id="198446">
    <property type="interactions" value="36"/>
</dbReference>
<dbReference type="CORUM" id="P08003"/>
<dbReference type="FunCoup" id="P08003">
    <property type="interactions" value="697"/>
</dbReference>
<dbReference type="IntAct" id="P08003">
    <property type="interactions" value="1"/>
</dbReference>
<dbReference type="STRING" id="10090.ENSMUSP00000076521"/>
<dbReference type="GlyCosmos" id="P08003">
    <property type="glycosylation" value="1 site, No reported glycans"/>
</dbReference>
<dbReference type="GlyGen" id="P08003">
    <property type="glycosylation" value="2 sites, 1 O-linked glycan (1 site)"/>
</dbReference>
<dbReference type="iPTMnet" id="P08003"/>
<dbReference type="PhosphoSitePlus" id="P08003"/>
<dbReference type="SwissPalm" id="P08003"/>
<dbReference type="jPOST" id="P08003"/>
<dbReference type="PaxDb" id="10090-ENSMUSP00000076521"/>
<dbReference type="PeptideAtlas" id="P08003"/>
<dbReference type="ProteomicsDB" id="289334"/>
<dbReference type="Pumba" id="P08003"/>
<dbReference type="DNASU" id="12304"/>
<dbReference type="GeneID" id="12304"/>
<dbReference type="KEGG" id="mmu:12304"/>
<dbReference type="UCSC" id="uc009btf.1">
    <property type="organism name" value="mouse"/>
</dbReference>
<dbReference type="AGR" id="MGI:104864"/>
<dbReference type="CTD" id="9601"/>
<dbReference type="MGI" id="MGI:104864">
    <property type="gene designation" value="Pdia4"/>
</dbReference>
<dbReference type="eggNOG" id="KOG0190">
    <property type="taxonomic scope" value="Eukaryota"/>
</dbReference>
<dbReference type="InParanoid" id="P08003"/>
<dbReference type="OrthoDB" id="427280at2759"/>
<dbReference type="PhylomeDB" id="P08003"/>
<dbReference type="TreeFam" id="TF106382"/>
<dbReference type="BioGRID-ORCS" id="12304">
    <property type="hits" value="0 hits in 80 CRISPR screens"/>
</dbReference>
<dbReference type="ChiTaRS" id="Pdia4">
    <property type="organism name" value="mouse"/>
</dbReference>
<dbReference type="EvolutionaryTrace" id="P08003"/>
<dbReference type="PRO" id="PR:P08003"/>
<dbReference type="Proteomes" id="UP000000589">
    <property type="component" value="Unplaced"/>
</dbReference>
<dbReference type="RNAct" id="P08003">
    <property type="molecule type" value="protein"/>
</dbReference>
<dbReference type="GO" id="GO:0009986">
    <property type="term" value="C:cell surface"/>
    <property type="evidence" value="ECO:0000314"/>
    <property type="project" value="MGI"/>
</dbReference>
<dbReference type="GO" id="GO:0005783">
    <property type="term" value="C:endoplasmic reticulum"/>
    <property type="evidence" value="ECO:0000314"/>
    <property type="project" value="MGI"/>
</dbReference>
<dbReference type="GO" id="GO:0034663">
    <property type="term" value="C:endoplasmic reticulum chaperone complex"/>
    <property type="evidence" value="ECO:0000314"/>
    <property type="project" value="ParkinsonsUK-UCL"/>
</dbReference>
<dbReference type="GO" id="GO:0005788">
    <property type="term" value="C:endoplasmic reticulum lumen"/>
    <property type="evidence" value="ECO:0007669"/>
    <property type="project" value="UniProtKB-SubCell"/>
</dbReference>
<dbReference type="GO" id="GO:0042470">
    <property type="term" value="C:melanosome"/>
    <property type="evidence" value="ECO:0007669"/>
    <property type="project" value="UniProtKB-SubCell"/>
</dbReference>
<dbReference type="GO" id="GO:0005178">
    <property type="term" value="F:integrin binding"/>
    <property type="evidence" value="ECO:0000353"/>
    <property type="project" value="MGI"/>
</dbReference>
<dbReference type="GO" id="GO:0003756">
    <property type="term" value="F:protein disulfide isomerase activity"/>
    <property type="evidence" value="ECO:0000314"/>
    <property type="project" value="MGI"/>
</dbReference>
<dbReference type="GO" id="GO:0072378">
    <property type="term" value="P:blood coagulation, fibrin clot formation"/>
    <property type="evidence" value="ECO:0000315"/>
    <property type="project" value="MGI"/>
</dbReference>
<dbReference type="GO" id="GO:0061077">
    <property type="term" value="P:chaperone-mediated protein folding"/>
    <property type="evidence" value="ECO:0000250"/>
    <property type="project" value="UniProtKB"/>
</dbReference>
<dbReference type="GO" id="GO:0070527">
    <property type="term" value="P:platelet aggregation"/>
    <property type="evidence" value="ECO:0000315"/>
    <property type="project" value="MGI"/>
</dbReference>
<dbReference type="CDD" id="cd02961">
    <property type="entry name" value="PDI_a_family"/>
    <property type="match status" value="2"/>
</dbReference>
<dbReference type="CDD" id="cd02995">
    <property type="entry name" value="PDI_a_PDI_a'_C"/>
    <property type="match status" value="1"/>
</dbReference>
<dbReference type="CDD" id="cd03073">
    <property type="entry name" value="PDI_b'_ERp72_ERp57"/>
    <property type="match status" value="1"/>
</dbReference>
<dbReference type="CDD" id="cd03068">
    <property type="entry name" value="PDI_b_ERp72"/>
    <property type="match status" value="1"/>
</dbReference>
<dbReference type="FunFam" id="3.40.30.10:FF:000017">
    <property type="entry name" value="Protein disulfide-isomerase A4"/>
    <property type="match status" value="1"/>
</dbReference>
<dbReference type="FunFam" id="3.40.30.10:FF:000067">
    <property type="entry name" value="Protein disulfide-isomerase A4"/>
    <property type="match status" value="1"/>
</dbReference>
<dbReference type="FunFam" id="3.40.30.10:FF:000076">
    <property type="entry name" value="Protein disulfide-isomerase A4"/>
    <property type="match status" value="1"/>
</dbReference>
<dbReference type="FunFam" id="3.40.30.10:FF:000084">
    <property type="entry name" value="Protein disulfide-isomerase A4"/>
    <property type="match status" value="1"/>
</dbReference>
<dbReference type="FunFam" id="3.40.30.10:FF:000126">
    <property type="entry name" value="Protein disulfide-isomerase A4"/>
    <property type="match status" value="1"/>
</dbReference>
<dbReference type="Gene3D" id="3.40.30.10">
    <property type="entry name" value="Glutaredoxin"/>
    <property type="match status" value="5"/>
</dbReference>
<dbReference type="InterPro" id="IPR005788">
    <property type="entry name" value="PDI_thioredoxin-like_dom"/>
</dbReference>
<dbReference type="InterPro" id="IPR041866">
    <property type="entry name" value="PDIA4_PDI_b"/>
</dbReference>
<dbReference type="InterPro" id="IPR005792">
    <property type="entry name" value="Prot_disulphide_isomerase"/>
</dbReference>
<dbReference type="InterPro" id="IPR017068">
    <property type="entry name" value="Protein_diS-isomerase_A4"/>
</dbReference>
<dbReference type="InterPro" id="IPR036249">
    <property type="entry name" value="Thioredoxin-like_sf"/>
</dbReference>
<dbReference type="InterPro" id="IPR017937">
    <property type="entry name" value="Thioredoxin_CS"/>
</dbReference>
<dbReference type="InterPro" id="IPR013766">
    <property type="entry name" value="Thioredoxin_domain"/>
</dbReference>
<dbReference type="NCBIfam" id="TIGR01130">
    <property type="entry name" value="ER_PDI_fam"/>
    <property type="match status" value="1"/>
</dbReference>
<dbReference type="NCBIfam" id="TIGR01126">
    <property type="entry name" value="pdi_dom"/>
    <property type="match status" value="3"/>
</dbReference>
<dbReference type="PANTHER" id="PTHR18929">
    <property type="entry name" value="PROTEIN DISULFIDE ISOMERASE"/>
    <property type="match status" value="1"/>
</dbReference>
<dbReference type="PANTHER" id="PTHR18929:SF210">
    <property type="entry name" value="PROTEIN DISULFIDE-ISOMERASE A4"/>
    <property type="match status" value="1"/>
</dbReference>
<dbReference type="Pfam" id="PF00085">
    <property type="entry name" value="Thioredoxin"/>
    <property type="match status" value="3"/>
</dbReference>
<dbReference type="Pfam" id="PF13848">
    <property type="entry name" value="Thioredoxin_6"/>
    <property type="match status" value="1"/>
</dbReference>
<dbReference type="PIRSF" id="PIRSF036862">
    <property type="entry name" value="Disulphide_isom_A4"/>
    <property type="match status" value="1"/>
</dbReference>
<dbReference type="PRINTS" id="PR00421">
    <property type="entry name" value="THIOREDOXIN"/>
</dbReference>
<dbReference type="SUPFAM" id="SSF52833">
    <property type="entry name" value="Thioredoxin-like"/>
    <property type="match status" value="5"/>
</dbReference>
<dbReference type="PROSITE" id="PS00014">
    <property type="entry name" value="ER_TARGET"/>
    <property type="match status" value="1"/>
</dbReference>
<dbReference type="PROSITE" id="PS00194">
    <property type="entry name" value="THIOREDOXIN_1"/>
    <property type="match status" value="3"/>
</dbReference>
<dbReference type="PROSITE" id="PS51352">
    <property type="entry name" value="THIOREDOXIN_2"/>
    <property type="match status" value="3"/>
</dbReference>
<name>PDIA4_MOUSE</name>
<protein>
    <recommendedName>
        <fullName>Protein disulfide-isomerase A4</fullName>
        <ecNumber evidence="7">5.3.4.1</ecNumber>
    </recommendedName>
    <alternativeName>
        <fullName>Endoplasmic reticulum resident protein 72</fullName>
        <shortName>ER protein 72</shortName>
        <shortName>ERp-72</shortName>
        <shortName>ERp72</shortName>
    </alternativeName>
</protein>
<comment type="catalytic activity">
    <reaction evidence="7">
        <text>Catalyzes the rearrangement of -S-S- bonds in proteins.</text>
        <dbReference type="EC" id="5.3.4.1"/>
    </reaction>
</comment>
<comment type="subunit">
    <text evidence="5">Part of a large chaperone multiprotein complex comprising DNAJB11, HSP90B1, HSPA5, HYOU, PDIA2, PDIA4, PDIA6, PPIB, SDF2L1, UGGT1 and very small amounts of ERP29, but not, or at very low levels, CALR nor CANX. Component of a complex containing at least CRELD2, MANF, MATN3 and PDIA4 (PubMed:23956175).</text>
</comment>
<comment type="subcellular location">
    <subcellularLocation>
        <location evidence="1">Endoplasmic reticulum lumen</location>
    </subcellularLocation>
    <subcellularLocation>
        <location evidence="1">Melanosome</location>
    </subcellularLocation>
</comment>
<comment type="similarity">
    <text evidence="6">Belongs to the protein disulfide isomerase family.</text>
</comment>
<comment type="sequence caution" evidence="6">
    <conflict type="frameshift">
        <sequence resource="EMBL-CDS" id="CAA68777"/>
    </conflict>
</comment>
<evidence type="ECO:0000250" key="1">
    <source>
        <dbReference type="UniProtKB" id="P13667"/>
    </source>
</evidence>
<evidence type="ECO:0000255" key="2"/>
<evidence type="ECO:0000255" key="3">
    <source>
        <dbReference type="PROSITE-ProRule" id="PRU00691"/>
    </source>
</evidence>
<evidence type="ECO:0000256" key="4">
    <source>
        <dbReference type="SAM" id="MobiDB-lite"/>
    </source>
</evidence>
<evidence type="ECO:0000269" key="5">
    <source>
    </source>
</evidence>
<evidence type="ECO:0000305" key="6"/>
<evidence type="ECO:0000305" key="7">
    <source>
    </source>
</evidence>
<evidence type="ECO:0007829" key="8">
    <source>
        <dbReference type="PDB" id="2DJ1"/>
    </source>
</evidence>
<evidence type="ECO:0007829" key="9">
    <source>
        <dbReference type="PDB" id="2DJ2"/>
    </source>
</evidence>
<evidence type="ECO:0007829" key="10">
    <source>
        <dbReference type="PDB" id="2DJ3"/>
    </source>
</evidence>
<sequence>MKLRKAWLLVLLLALTQLLAAASAGDAHEDTSDTENATEEEEEEDDDDLEVKEENGVWVLNDGNFDNFVADKDTVLLEFYAPWCGHCKQFAPEYEKIASTLKDNDPPIAVAKIDATSASMLASKFDVSGYPTIKILKKGQAVDYDGSRTQEEIVAKVREVSQPDWTPPPEVTLSLTKDNFDDVVNNADIILVEFYAPWCGHCKKLAPEYEKAAKELSKRSPPIPLAKVDATEQTDLAKRFDVSGYPTLKIFRKGRPFDYNGPREKYGIVDYMIEQSGPPSKEILTLKQVQEFLKDGDDVVIIGLFQGDGDPAYLQYQDAANNLREDYKFHHTFSPEIAKFLKVSLGKLVLTHPEKFQSKYEPRFHVMDVQGSTEASAIKDYVVKHALPLVGHRKTSNDAKRYSKRPLVVVYYSVDFSFDYRAATQFWRNKVLEVAKDFPEYTFAIADEEDYATEVKDLGLSESGEDVNAAILDESGKKFAMEPEEFDSDTLREFVTAFKKGKLKPVIKSQPVPKNNKGPVKVVVGKTFDAIVMDPKKDVLIEFYAPWCGHCKQLEPIYTSLGKKYKGQKDLVIAKMDATANDITNDQYKVEGFPTIYFAPSGDKKNPIKFEGGNRDLEHLSKFIDEHATKRSRTKEEL</sequence>
<accession>P08003</accession>
<accession>P15841</accession>
<accession>Q3TT79</accession>
<accession>Q3UJW0</accession>
<accession>Q6NXW4</accession>
<accession>Q8BMT8</accession>